<gene>
    <name type="primary">wdsof1</name>
    <name type="ORF">DDB_G0276815</name>
</gene>
<protein>
    <recommendedName>
        <fullName>DDB1- and CUL4-associated factor 13</fullName>
    </recommendedName>
    <alternativeName>
        <fullName>WD repeat and SOF domain-containing protein 1</fullName>
    </alternativeName>
</protein>
<proteinExistence type="inferred from homology"/>
<organism>
    <name type="scientific">Dictyostelium discoideum</name>
    <name type="common">Social amoeba</name>
    <dbReference type="NCBI Taxonomy" id="44689"/>
    <lineage>
        <taxon>Eukaryota</taxon>
        <taxon>Amoebozoa</taxon>
        <taxon>Evosea</taxon>
        <taxon>Eumycetozoa</taxon>
        <taxon>Dictyostelia</taxon>
        <taxon>Dictyosteliales</taxon>
        <taxon>Dictyosteliaceae</taxon>
        <taxon>Dictyostelium</taxon>
    </lineage>
</organism>
<evidence type="ECO:0000250" key="1"/>
<evidence type="ECO:0000256" key="2">
    <source>
        <dbReference type="SAM" id="MobiDB-lite"/>
    </source>
</evidence>
<evidence type="ECO:0000305" key="3"/>
<reference key="1">
    <citation type="journal article" date="2002" name="Nature">
        <title>Sequence and analysis of chromosome 2 of Dictyostelium discoideum.</title>
        <authorList>
            <person name="Gloeckner G."/>
            <person name="Eichinger L."/>
            <person name="Szafranski K."/>
            <person name="Pachebat J.A."/>
            <person name="Bankier A.T."/>
            <person name="Dear P.H."/>
            <person name="Lehmann R."/>
            <person name="Baumgart C."/>
            <person name="Parra G."/>
            <person name="Abril J.F."/>
            <person name="Guigo R."/>
            <person name="Kumpf K."/>
            <person name="Tunggal B."/>
            <person name="Cox E.C."/>
            <person name="Quail M.A."/>
            <person name="Platzer M."/>
            <person name="Rosenthal A."/>
            <person name="Noegel A.A."/>
        </authorList>
    </citation>
    <scope>NUCLEOTIDE SEQUENCE [LARGE SCALE GENOMIC DNA]</scope>
    <source>
        <strain>AX4</strain>
    </source>
</reference>
<reference key="2">
    <citation type="journal article" date="2005" name="Nature">
        <title>The genome of the social amoeba Dictyostelium discoideum.</title>
        <authorList>
            <person name="Eichinger L."/>
            <person name="Pachebat J.A."/>
            <person name="Gloeckner G."/>
            <person name="Rajandream M.A."/>
            <person name="Sucgang R."/>
            <person name="Berriman M."/>
            <person name="Song J."/>
            <person name="Olsen R."/>
            <person name="Szafranski K."/>
            <person name="Xu Q."/>
            <person name="Tunggal B."/>
            <person name="Kummerfeld S."/>
            <person name="Madera M."/>
            <person name="Konfortov B.A."/>
            <person name="Rivero F."/>
            <person name="Bankier A.T."/>
            <person name="Lehmann R."/>
            <person name="Hamlin N."/>
            <person name="Davies R."/>
            <person name="Gaudet P."/>
            <person name="Fey P."/>
            <person name="Pilcher K."/>
            <person name="Chen G."/>
            <person name="Saunders D."/>
            <person name="Sodergren E.J."/>
            <person name="Davis P."/>
            <person name="Kerhornou A."/>
            <person name="Nie X."/>
            <person name="Hall N."/>
            <person name="Anjard C."/>
            <person name="Hemphill L."/>
            <person name="Bason N."/>
            <person name="Farbrother P."/>
            <person name="Desany B."/>
            <person name="Just E."/>
            <person name="Morio T."/>
            <person name="Rost R."/>
            <person name="Churcher C.M."/>
            <person name="Cooper J."/>
            <person name="Haydock S."/>
            <person name="van Driessche N."/>
            <person name="Cronin A."/>
            <person name="Goodhead I."/>
            <person name="Muzny D.M."/>
            <person name="Mourier T."/>
            <person name="Pain A."/>
            <person name="Lu M."/>
            <person name="Harper D."/>
            <person name="Lindsay R."/>
            <person name="Hauser H."/>
            <person name="James K.D."/>
            <person name="Quiles M."/>
            <person name="Madan Babu M."/>
            <person name="Saito T."/>
            <person name="Buchrieser C."/>
            <person name="Wardroper A."/>
            <person name="Felder M."/>
            <person name="Thangavelu M."/>
            <person name="Johnson D."/>
            <person name="Knights A."/>
            <person name="Loulseged H."/>
            <person name="Mungall K.L."/>
            <person name="Oliver K."/>
            <person name="Price C."/>
            <person name="Quail M.A."/>
            <person name="Urushihara H."/>
            <person name="Hernandez J."/>
            <person name="Rabbinowitsch E."/>
            <person name="Steffen D."/>
            <person name="Sanders M."/>
            <person name="Ma J."/>
            <person name="Kohara Y."/>
            <person name="Sharp S."/>
            <person name="Simmonds M.N."/>
            <person name="Spiegler S."/>
            <person name="Tivey A."/>
            <person name="Sugano S."/>
            <person name="White B."/>
            <person name="Walker D."/>
            <person name="Woodward J.R."/>
            <person name="Winckler T."/>
            <person name="Tanaka Y."/>
            <person name="Shaulsky G."/>
            <person name="Schleicher M."/>
            <person name="Weinstock G.M."/>
            <person name="Rosenthal A."/>
            <person name="Cox E.C."/>
            <person name="Chisholm R.L."/>
            <person name="Gibbs R.A."/>
            <person name="Loomis W.F."/>
            <person name="Platzer M."/>
            <person name="Kay R.R."/>
            <person name="Williams J.G."/>
            <person name="Dear P.H."/>
            <person name="Noegel A.A."/>
            <person name="Barrell B.G."/>
            <person name="Kuspa A."/>
        </authorList>
    </citation>
    <scope>NUCLEOTIDE SEQUENCE [LARGE SCALE GENOMIC DNA]</scope>
    <source>
        <strain>AX4</strain>
    </source>
</reference>
<dbReference type="EMBL" id="AAFI02000019">
    <property type="protein sequence ID" value="EAL68909.1"/>
    <property type="molecule type" value="Genomic_DNA"/>
</dbReference>
<dbReference type="RefSeq" id="XP_642903.1">
    <property type="nucleotide sequence ID" value="XM_637811.1"/>
</dbReference>
<dbReference type="SMR" id="Q7KWL3"/>
<dbReference type="FunCoup" id="Q7KWL3">
    <property type="interactions" value="1121"/>
</dbReference>
<dbReference type="STRING" id="44689.Q7KWL3"/>
<dbReference type="GlyGen" id="Q7KWL3">
    <property type="glycosylation" value="1 site"/>
</dbReference>
<dbReference type="PaxDb" id="44689-DDB0168265"/>
<dbReference type="EnsemblProtists" id="EAL68909">
    <property type="protein sequence ID" value="EAL68909"/>
    <property type="gene ID" value="DDB_G0276815"/>
</dbReference>
<dbReference type="GeneID" id="8620769"/>
<dbReference type="KEGG" id="ddi:DDB_G0276815"/>
<dbReference type="dictyBase" id="DDB_G0276815"/>
<dbReference type="VEuPathDB" id="AmoebaDB:DDB_G0276815"/>
<dbReference type="eggNOG" id="KOG0268">
    <property type="taxonomic scope" value="Eukaryota"/>
</dbReference>
<dbReference type="HOGENOM" id="CLU_033999_0_0_1"/>
<dbReference type="InParanoid" id="Q7KWL3"/>
<dbReference type="OMA" id="EDHNAYI"/>
<dbReference type="PhylomeDB" id="Q7KWL3"/>
<dbReference type="Reactome" id="R-DDI-6791226">
    <property type="pathway name" value="Major pathway of rRNA processing in the nucleolus and cytosol"/>
</dbReference>
<dbReference type="Reactome" id="R-DDI-8951664">
    <property type="pathway name" value="Neddylation"/>
</dbReference>
<dbReference type="UniPathway" id="UPA00143"/>
<dbReference type="PRO" id="PR:Q7KWL3"/>
<dbReference type="Proteomes" id="UP000002195">
    <property type="component" value="Chromosome 2"/>
</dbReference>
<dbReference type="GO" id="GO:0080008">
    <property type="term" value="C:Cul4-RING E3 ubiquitin ligase complex"/>
    <property type="evidence" value="ECO:0000250"/>
    <property type="project" value="UniProtKB"/>
</dbReference>
<dbReference type="GO" id="GO:0005730">
    <property type="term" value="C:nucleolus"/>
    <property type="evidence" value="ECO:0000318"/>
    <property type="project" value="GO_Central"/>
</dbReference>
<dbReference type="GO" id="GO:0032040">
    <property type="term" value="C:small-subunit processome"/>
    <property type="evidence" value="ECO:0000318"/>
    <property type="project" value="GO_Central"/>
</dbReference>
<dbReference type="GO" id="GO:0000462">
    <property type="term" value="P:maturation of SSU-rRNA from tricistronic rRNA transcript (SSU-rRNA, 5.8S rRNA, LSU-rRNA)"/>
    <property type="evidence" value="ECO:0000318"/>
    <property type="project" value="GO_Central"/>
</dbReference>
<dbReference type="GO" id="GO:0016567">
    <property type="term" value="P:protein ubiquitination"/>
    <property type="evidence" value="ECO:0007669"/>
    <property type="project" value="UniProtKB-UniPathway"/>
</dbReference>
<dbReference type="CDD" id="cd00200">
    <property type="entry name" value="WD40"/>
    <property type="match status" value="1"/>
</dbReference>
<dbReference type="FunFam" id="2.130.10.10:FF:001900">
    <property type="entry name" value="DDB1- and CUL4-associated factor 13"/>
    <property type="match status" value="1"/>
</dbReference>
<dbReference type="FunFam" id="2.130.10.10:FF:001105">
    <property type="entry name" value="WD40-repeat-containing domain protein"/>
    <property type="match status" value="1"/>
</dbReference>
<dbReference type="Gene3D" id="2.130.10.10">
    <property type="entry name" value="YVTN repeat-like/Quinoprotein amine dehydrogenase"/>
    <property type="match status" value="2"/>
</dbReference>
<dbReference type="InterPro" id="IPR020472">
    <property type="entry name" value="G-protein_beta_WD-40_rep"/>
</dbReference>
<dbReference type="InterPro" id="IPR007287">
    <property type="entry name" value="Sof1"/>
</dbReference>
<dbReference type="InterPro" id="IPR015943">
    <property type="entry name" value="WD40/YVTN_repeat-like_dom_sf"/>
</dbReference>
<dbReference type="InterPro" id="IPR019775">
    <property type="entry name" value="WD40_repeat_CS"/>
</dbReference>
<dbReference type="InterPro" id="IPR036322">
    <property type="entry name" value="WD40_repeat_dom_sf"/>
</dbReference>
<dbReference type="InterPro" id="IPR001680">
    <property type="entry name" value="WD40_rpt"/>
</dbReference>
<dbReference type="InterPro" id="IPR051733">
    <property type="entry name" value="WD_repeat_DCAF13/WDSOF1"/>
</dbReference>
<dbReference type="PANTHER" id="PTHR22851:SF0">
    <property type="entry name" value="DDB1- AND CUL4-ASSOCIATED FACTOR 13"/>
    <property type="match status" value="1"/>
</dbReference>
<dbReference type="PANTHER" id="PTHR22851">
    <property type="entry name" value="U3 SMALL NUCLEOLAR RNA U3 SNORNA ASSOCIATED PROTEIN"/>
    <property type="match status" value="1"/>
</dbReference>
<dbReference type="Pfam" id="PF04158">
    <property type="entry name" value="Sof1"/>
    <property type="match status" value="1"/>
</dbReference>
<dbReference type="Pfam" id="PF00400">
    <property type="entry name" value="WD40"/>
    <property type="match status" value="5"/>
</dbReference>
<dbReference type="PRINTS" id="PR00320">
    <property type="entry name" value="GPROTEINBRPT"/>
</dbReference>
<dbReference type="SMART" id="SM00320">
    <property type="entry name" value="WD40"/>
    <property type="match status" value="7"/>
</dbReference>
<dbReference type="SUPFAM" id="SSF50978">
    <property type="entry name" value="WD40 repeat-like"/>
    <property type="match status" value="1"/>
</dbReference>
<dbReference type="PROSITE" id="PS00678">
    <property type="entry name" value="WD_REPEATS_1"/>
    <property type="match status" value="1"/>
</dbReference>
<dbReference type="PROSITE" id="PS50082">
    <property type="entry name" value="WD_REPEATS_2"/>
    <property type="match status" value="4"/>
</dbReference>
<dbReference type="PROSITE" id="PS50294">
    <property type="entry name" value="WD_REPEATS_REGION"/>
    <property type="match status" value="1"/>
</dbReference>
<comment type="function">
    <text evidence="1">Possible role in ribosomal RNA processing. May function as a substrate receptor for CUL4-DDB1 E3 ubiquitin-protein ligase complex (By similarity).</text>
</comment>
<comment type="pathway">
    <text>Protein modification; protein ubiquitination.</text>
</comment>
<comment type="subcellular location">
    <subcellularLocation>
        <location evidence="1">Nucleus</location>
        <location evidence="1">Nucleolus</location>
    </subcellularLocation>
</comment>
<comment type="similarity">
    <text evidence="3">Belongs to the WD repeat DCAF13/WDSOF1 family.</text>
</comment>
<name>DCA13_DICDI</name>
<feature type="chain" id="PRO_0000342367" description="DDB1- and CUL4-associated factor 13">
    <location>
        <begin position="1"/>
        <end position="445"/>
    </location>
</feature>
<feature type="repeat" description="WD 1">
    <location>
        <begin position="64"/>
        <end position="104"/>
    </location>
</feature>
<feature type="repeat" description="WD 2">
    <location>
        <begin position="107"/>
        <end position="146"/>
    </location>
</feature>
<feature type="repeat" description="WD 3">
    <location>
        <begin position="154"/>
        <end position="192"/>
    </location>
</feature>
<feature type="repeat" description="WD 4">
    <location>
        <begin position="196"/>
        <end position="235"/>
    </location>
</feature>
<feature type="repeat" description="WD 5">
    <location>
        <begin position="237"/>
        <end position="277"/>
    </location>
</feature>
<feature type="repeat" description="WD 6">
    <location>
        <begin position="281"/>
        <end position="320"/>
    </location>
</feature>
<feature type="repeat" description="WD 7">
    <location>
        <begin position="324"/>
        <end position="363"/>
    </location>
</feature>
<feature type="region of interest" description="Disordered" evidence="2">
    <location>
        <begin position="417"/>
        <end position="445"/>
    </location>
</feature>
<feature type="compositionally biased region" description="Basic and acidic residues" evidence="2">
    <location>
        <begin position="430"/>
        <end position="445"/>
    </location>
</feature>
<accession>Q7KWL3</accession>
<accession>Q550M9</accession>
<keyword id="KW-0539">Nucleus</keyword>
<keyword id="KW-1185">Reference proteome</keyword>
<keyword id="KW-0677">Repeat</keyword>
<keyword id="KW-0687">Ribonucleoprotein</keyword>
<keyword id="KW-0690">Ribosome biogenesis</keyword>
<keyword id="KW-0698">rRNA processing</keyword>
<keyword id="KW-0833">Ubl conjugation pathway</keyword>
<keyword id="KW-0853">WD repeat</keyword>
<sequence length="445" mass="51067">MKIKVISRSEEEETKEKASDVRKLHRNLDPNLHPFERPREYVRALNATKLDRVFAKPFIGSLSGHTDGIFTMTRHPTLLNNVASGSCDGVIKLWNLTSLTERTTVQAHNGFVRGLVFTPDGKHMVSCGEDKTIKMWKLDLPEYTFNQEVISIYNGKNAFTSIDHQLNSTTFATSGPTSVEIWKHQRSTPIQTLQWGHSTITKVKFNPIETHLLASCTTDRDIILYDIRENSPAQKLTTSMRSNSIAWCPTESFTLAIANEDENVYQYDIRNLSKAMTVHRDHVGSVLDIDYSPTGREIVSGSYDKTIRIFPVDSYKSREVYYTNRMQRIFSVLFTADSRFILSGSDDMNIRVWKANSSAPLGILSNREKEKLEYQDKIKEKFKEIPELKTIATHRRVPQLVYKRRFIKNEIHKAKQRRVKNISNNSGKSPKVEKVLSKHTIKVDN</sequence>